<proteinExistence type="evidence at protein level"/>
<protein>
    <recommendedName>
        <fullName>17.1 kDa class II heat shock protein</fullName>
    </recommendedName>
</protein>
<dbReference type="EMBL" id="M33901">
    <property type="protein sequence ID" value="AAA33670.1"/>
    <property type="molecule type" value="mRNA"/>
</dbReference>
<dbReference type="PIR" id="S12720">
    <property type="entry name" value="HHPM17"/>
</dbReference>
<dbReference type="PDB" id="5DS1">
    <property type="method" value="X-ray"/>
    <property type="resolution" value="2.63 A"/>
    <property type="chains" value="A/B/C=43-135"/>
</dbReference>
<dbReference type="PDBsum" id="5DS1"/>
<dbReference type="SMR" id="P19242"/>
<dbReference type="GO" id="GO:0005737">
    <property type="term" value="C:cytoplasm"/>
    <property type="evidence" value="ECO:0007669"/>
    <property type="project" value="UniProtKB-SubCell"/>
</dbReference>
<dbReference type="FunFam" id="2.60.40.790:FF:000010">
    <property type="entry name" value="17.3 kDa class II heat shock protein-like"/>
    <property type="match status" value="1"/>
</dbReference>
<dbReference type="Gene3D" id="2.60.40.790">
    <property type="match status" value="1"/>
</dbReference>
<dbReference type="InterPro" id="IPR002068">
    <property type="entry name" value="A-crystallin/Hsp20_dom"/>
</dbReference>
<dbReference type="InterPro" id="IPR008978">
    <property type="entry name" value="HSP20-like_chaperone"/>
</dbReference>
<dbReference type="InterPro" id="IPR031107">
    <property type="entry name" value="Small_HSP"/>
</dbReference>
<dbReference type="PANTHER" id="PTHR11527">
    <property type="entry name" value="HEAT-SHOCK PROTEIN 20 FAMILY MEMBER"/>
    <property type="match status" value="1"/>
</dbReference>
<dbReference type="Pfam" id="PF00011">
    <property type="entry name" value="HSP20"/>
    <property type="match status" value="1"/>
</dbReference>
<dbReference type="SUPFAM" id="SSF49764">
    <property type="entry name" value="HSP20-like chaperones"/>
    <property type="match status" value="1"/>
</dbReference>
<dbReference type="PROSITE" id="PS01031">
    <property type="entry name" value="SHSP"/>
    <property type="match status" value="1"/>
</dbReference>
<reference key="1">
    <citation type="journal article" date="1990" name="Nucleic Acids Res.">
        <title>A cDNA clone from Pisum sativum encoding a low molecular weight heat shock protein.</title>
        <authorList>
            <person name="Lauzon L.M."/>
            <person name="Helm K.W."/>
            <person name="Vierling E."/>
        </authorList>
    </citation>
    <scope>NUCLEOTIDE SEQUENCE [MRNA]</scope>
</reference>
<name>HSP21_PEA</name>
<gene>
    <name type="primary">HSP17.7</name>
</gene>
<sequence>MDLDSPLFNTLHHIMDLTDDTTEKNLNAPTRTYVRDAKAMAATPADVKEHPNSYVFMVDMPGVKSGDIKVQVEDENVLLISGERKREEEKEGVKYLKMERRIGKLMRKFVLPENANIEAISAISQDGVLTVTVNKLPPPEPKKPKTIQVKVA</sequence>
<evidence type="ECO:0000255" key="1">
    <source>
        <dbReference type="PROSITE-ProRule" id="PRU00285"/>
    </source>
</evidence>
<evidence type="ECO:0007829" key="2">
    <source>
        <dbReference type="PDB" id="5DS1"/>
    </source>
</evidence>
<organism>
    <name type="scientific">Pisum sativum</name>
    <name type="common">Garden pea</name>
    <name type="synonym">Lathyrus oleraceus</name>
    <dbReference type="NCBI Taxonomy" id="3888"/>
    <lineage>
        <taxon>Eukaryota</taxon>
        <taxon>Viridiplantae</taxon>
        <taxon>Streptophyta</taxon>
        <taxon>Embryophyta</taxon>
        <taxon>Tracheophyta</taxon>
        <taxon>Spermatophyta</taxon>
        <taxon>Magnoliopsida</taxon>
        <taxon>eudicotyledons</taxon>
        <taxon>Gunneridae</taxon>
        <taxon>Pentapetalae</taxon>
        <taxon>rosids</taxon>
        <taxon>fabids</taxon>
        <taxon>Fabales</taxon>
        <taxon>Fabaceae</taxon>
        <taxon>Papilionoideae</taxon>
        <taxon>50 kb inversion clade</taxon>
        <taxon>NPAAA clade</taxon>
        <taxon>Hologalegina</taxon>
        <taxon>IRL clade</taxon>
        <taxon>Fabeae</taxon>
        <taxon>Pisum</taxon>
    </lineage>
</organism>
<keyword id="KW-0002">3D-structure</keyword>
<keyword id="KW-0963">Cytoplasm</keyword>
<keyword id="KW-0346">Stress response</keyword>
<feature type="chain" id="PRO_0000125996" description="17.1 kDa class II heat shock protein">
    <location>
        <begin position="1"/>
        <end position="152"/>
    </location>
</feature>
<feature type="domain" description="sHSP" evidence="1">
    <location>
        <begin position="36"/>
        <end position="152"/>
    </location>
</feature>
<feature type="strand" evidence="2">
    <location>
        <begin position="45"/>
        <end position="50"/>
    </location>
</feature>
<feature type="strand" evidence="2">
    <location>
        <begin position="53"/>
        <end position="59"/>
    </location>
</feature>
<feature type="strand" evidence="2">
    <location>
        <begin position="67"/>
        <end position="73"/>
    </location>
</feature>
<feature type="turn" evidence="2">
    <location>
        <begin position="74"/>
        <end position="76"/>
    </location>
</feature>
<feature type="strand" evidence="2">
    <location>
        <begin position="77"/>
        <end position="84"/>
    </location>
</feature>
<feature type="strand" evidence="2">
    <location>
        <begin position="103"/>
        <end position="110"/>
    </location>
</feature>
<feature type="strand" evidence="2">
    <location>
        <begin position="119"/>
        <end position="125"/>
    </location>
</feature>
<feature type="strand" evidence="2">
    <location>
        <begin position="128"/>
        <end position="133"/>
    </location>
</feature>
<accession>P19242</accession>
<comment type="subcellular location">
    <subcellularLocation>
        <location>Cytoplasm</location>
    </subcellularLocation>
</comment>
<comment type="similarity">
    <text evidence="1">Belongs to the small heat shock protein (HSP20) family.</text>
</comment>